<gene>
    <name evidence="1" type="primary">fsa</name>
    <name type="synonym">talC</name>
    <name type="ordered locus">STY3758</name>
    <name type="ordered locus">t3508</name>
</gene>
<dbReference type="EC" id="4.1.2.-" evidence="1"/>
<dbReference type="EMBL" id="AL513382">
    <property type="protein sequence ID" value="CAD09513.1"/>
    <property type="molecule type" value="Genomic_DNA"/>
</dbReference>
<dbReference type="EMBL" id="AE014613">
    <property type="protein sequence ID" value="AAO71016.1"/>
    <property type="molecule type" value="Genomic_DNA"/>
</dbReference>
<dbReference type="RefSeq" id="NP_457943.1">
    <property type="nucleotide sequence ID" value="NC_003198.1"/>
</dbReference>
<dbReference type="RefSeq" id="WP_000424865.1">
    <property type="nucleotide sequence ID" value="NZ_WSUR01000010.1"/>
</dbReference>
<dbReference type="SMR" id="Q8Z305"/>
<dbReference type="STRING" id="220341.gene:17587624"/>
<dbReference type="KEGG" id="stt:t3508"/>
<dbReference type="KEGG" id="sty:STY3758"/>
<dbReference type="PATRIC" id="fig|220341.7.peg.3832"/>
<dbReference type="eggNOG" id="COG0176">
    <property type="taxonomic scope" value="Bacteria"/>
</dbReference>
<dbReference type="HOGENOM" id="CLU_079764_2_0_6"/>
<dbReference type="OMA" id="DWNNAFG"/>
<dbReference type="OrthoDB" id="9807051at2"/>
<dbReference type="Proteomes" id="UP000000541">
    <property type="component" value="Chromosome"/>
</dbReference>
<dbReference type="Proteomes" id="UP000002670">
    <property type="component" value="Chromosome"/>
</dbReference>
<dbReference type="GO" id="GO:0005737">
    <property type="term" value="C:cytoplasm"/>
    <property type="evidence" value="ECO:0007669"/>
    <property type="project" value="UniProtKB-SubCell"/>
</dbReference>
<dbReference type="GO" id="GO:0097023">
    <property type="term" value="F:fructose 6-phosphate aldolase activity"/>
    <property type="evidence" value="ECO:0007669"/>
    <property type="project" value="RHEA"/>
</dbReference>
<dbReference type="GO" id="GO:0006000">
    <property type="term" value="P:fructose metabolic process"/>
    <property type="evidence" value="ECO:0007669"/>
    <property type="project" value="UniProtKB-UniRule"/>
</dbReference>
<dbReference type="CDD" id="cd00956">
    <property type="entry name" value="Transaldolase_FSA"/>
    <property type="match status" value="1"/>
</dbReference>
<dbReference type="FunFam" id="3.20.20.70:FF:000018">
    <property type="entry name" value="Probable transaldolase"/>
    <property type="match status" value="1"/>
</dbReference>
<dbReference type="Gene3D" id="3.20.20.70">
    <property type="entry name" value="Aldolase class I"/>
    <property type="match status" value="1"/>
</dbReference>
<dbReference type="HAMAP" id="MF_00496">
    <property type="entry name" value="F6P_aldolase"/>
    <property type="match status" value="1"/>
</dbReference>
<dbReference type="InterPro" id="IPR013785">
    <property type="entry name" value="Aldolase_TIM"/>
</dbReference>
<dbReference type="InterPro" id="IPR023001">
    <property type="entry name" value="F6P_aldolase"/>
</dbReference>
<dbReference type="InterPro" id="IPR001585">
    <property type="entry name" value="TAL/FSA"/>
</dbReference>
<dbReference type="InterPro" id="IPR004731">
    <property type="entry name" value="Transaldolase_3B/F6P_aldolase"/>
</dbReference>
<dbReference type="InterPro" id="IPR018225">
    <property type="entry name" value="Transaldolase_AS"/>
</dbReference>
<dbReference type="InterPro" id="IPR033919">
    <property type="entry name" value="TSA/FSA_arc/bac"/>
</dbReference>
<dbReference type="NCBIfam" id="TIGR00875">
    <property type="entry name" value="fsa_talC_mipB"/>
    <property type="match status" value="1"/>
</dbReference>
<dbReference type="NCBIfam" id="NF009296">
    <property type="entry name" value="PRK12653.1"/>
    <property type="match status" value="1"/>
</dbReference>
<dbReference type="PANTHER" id="PTHR10683:SF40">
    <property type="entry name" value="FRUCTOSE-6-PHOSPHATE ALDOLASE 1-RELATED"/>
    <property type="match status" value="1"/>
</dbReference>
<dbReference type="PANTHER" id="PTHR10683">
    <property type="entry name" value="TRANSALDOLASE"/>
    <property type="match status" value="1"/>
</dbReference>
<dbReference type="Pfam" id="PF00923">
    <property type="entry name" value="TAL_FSA"/>
    <property type="match status" value="1"/>
</dbReference>
<dbReference type="SUPFAM" id="SSF51569">
    <property type="entry name" value="Aldolase"/>
    <property type="match status" value="1"/>
</dbReference>
<dbReference type="PROSITE" id="PS01054">
    <property type="entry name" value="TRANSALDOLASE_1"/>
    <property type="match status" value="1"/>
</dbReference>
<dbReference type="PROSITE" id="PS00958">
    <property type="entry name" value="TRANSALDOLASE_2"/>
    <property type="match status" value="1"/>
</dbReference>
<proteinExistence type="inferred from homology"/>
<protein>
    <recommendedName>
        <fullName evidence="1">Fructose-6-phosphate aldolase</fullName>
        <ecNumber evidence="1">4.1.2.-</ecNumber>
    </recommendedName>
</protein>
<evidence type="ECO:0000255" key="1">
    <source>
        <dbReference type="HAMAP-Rule" id="MF_00496"/>
    </source>
</evidence>
<organism>
    <name type="scientific">Salmonella typhi</name>
    <dbReference type="NCBI Taxonomy" id="90370"/>
    <lineage>
        <taxon>Bacteria</taxon>
        <taxon>Pseudomonadati</taxon>
        <taxon>Pseudomonadota</taxon>
        <taxon>Gammaproteobacteria</taxon>
        <taxon>Enterobacterales</taxon>
        <taxon>Enterobacteriaceae</taxon>
        <taxon>Salmonella</taxon>
    </lineage>
</organism>
<reference key="1">
    <citation type="journal article" date="2001" name="Nature">
        <title>Complete genome sequence of a multiple drug resistant Salmonella enterica serovar Typhi CT18.</title>
        <authorList>
            <person name="Parkhill J."/>
            <person name="Dougan G."/>
            <person name="James K.D."/>
            <person name="Thomson N.R."/>
            <person name="Pickard D."/>
            <person name="Wain J."/>
            <person name="Churcher C.M."/>
            <person name="Mungall K.L."/>
            <person name="Bentley S.D."/>
            <person name="Holden M.T.G."/>
            <person name="Sebaihia M."/>
            <person name="Baker S."/>
            <person name="Basham D."/>
            <person name="Brooks K."/>
            <person name="Chillingworth T."/>
            <person name="Connerton P."/>
            <person name="Cronin A."/>
            <person name="Davis P."/>
            <person name="Davies R.M."/>
            <person name="Dowd L."/>
            <person name="White N."/>
            <person name="Farrar J."/>
            <person name="Feltwell T."/>
            <person name="Hamlin N."/>
            <person name="Haque A."/>
            <person name="Hien T.T."/>
            <person name="Holroyd S."/>
            <person name="Jagels K."/>
            <person name="Krogh A."/>
            <person name="Larsen T.S."/>
            <person name="Leather S."/>
            <person name="Moule S."/>
            <person name="O'Gaora P."/>
            <person name="Parry C."/>
            <person name="Quail M.A."/>
            <person name="Rutherford K.M."/>
            <person name="Simmonds M."/>
            <person name="Skelton J."/>
            <person name="Stevens K."/>
            <person name="Whitehead S."/>
            <person name="Barrell B.G."/>
        </authorList>
    </citation>
    <scope>NUCLEOTIDE SEQUENCE [LARGE SCALE GENOMIC DNA]</scope>
    <source>
        <strain>CT18</strain>
    </source>
</reference>
<reference key="2">
    <citation type="journal article" date="2003" name="J. Bacteriol.">
        <title>Comparative genomics of Salmonella enterica serovar Typhi strains Ty2 and CT18.</title>
        <authorList>
            <person name="Deng W."/>
            <person name="Liou S.-R."/>
            <person name="Plunkett G. III"/>
            <person name="Mayhew G.F."/>
            <person name="Rose D.J."/>
            <person name="Burland V."/>
            <person name="Kodoyianni V."/>
            <person name="Schwartz D.C."/>
            <person name="Blattner F.R."/>
        </authorList>
    </citation>
    <scope>NUCLEOTIDE SEQUENCE [LARGE SCALE GENOMIC DNA]</scope>
    <source>
        <strain>ATCC 700931 / Ty2</strain>
    </source>
</reference>
<keyword id="KW-0119">Carbohydrate metabolism</keyword>
<keyword id="KW-0963">Cytoplasm</keyword>
<keyword id="KW-0456">Lyase</keyword>
<keyword id="KW-0704">Schiff base</keyword>
<sequence>MELYLDTANVAEVERLARIFPIAGVTTNPSIVAASKESIWDVLPRLQNAIGEEGTLFAQTMSRDAKGMVEEAKRLNNAIPGIVVKIPVTAEGLAAIKLLKKEGIVTLGTAVYSASQGLLAALAGAKYVAPYVNRVDAQGGDGIRMVLELQTLLEHHAPDSMVLAASFKTPRQALDCLLAGCQAITLPLDVAQQMLNTPAVESAIEKFEQDWKNAFGNLNL</sequence>
<name>FSA_SALTI</name>
<accession>Q8Z305</accession>
<comment type="function">
    <text evidence="1">Catalyzes the reversible formation of fructose 6-phosphate from dihydroxyacetone and D-glyceraldehyde 3-phosphate via an aldolization reaction.</text>
</comment>
<comment type="catalytic activity">
    <reaction evidence="1">
        <text>beta-D-fructose 6-phosphate = dihydroxyacetone + D-glyceraldehyde 3-phosphate</text>
        <dbReference type="Rhea" id="RHEA:28002"/>
        <dbReference type="ChEBI" id="CHEBI:16016"/>
        <dbReference type="ChEBI" id="CHEBI:57634"/>
        <dbReference type="ChEBI" id="CHEBI:59776"/>
    </reaction>
</comment>
<comment type="subunit">
    <text evidence="1">Homodecamer.</text>
</comment>
<comment type="subcellular location">
    <subcellularLocation>
        <location evidence="1">Cytoplasm</location>
    </subcellularLocation>
</comment>
<comment type="similarity">
    <text evidence="1">Belongs to the transaldolase family. Type 3A subfamily.</text>
</comment>
<feature type="chain" id="PRO_0000173649" description="Fructose-6-phosphate aldolase">
    <location>
        <begin position="1"/>
        <end position="220"/>
    </location>
</feature>
<feature type="active site" description="Schiff-base intermediate with substrate" evidence="1">
    <location>
        <position position="85"/>
    </location>
</feature>